<sequence length="267" mass="30256">MKYKFSHNFISYNLFLFVFMSLILLPYSHASSMGFNTSQHKFSVRTGETRIIYPLSSVKGVSLSVTNPQDYPILVQTQVKGEDKHSPAPFMATPPLFRLDAGMRGRVRVTRTGGNFPEDRESLQWLCITGVPPKEGDVWDNSQHDKKNNMQDVNLNILLSVGTCMKLLVRPDQLRQKPEEMAGKLIWHRNGQQLQVNNPTPFYMNFKSVSLGNKNIKLSSAGNENYVAPFAERSFSLPVDMAERPAEINWQIINDLGSESQVFKANI</sequence>
<reference key="1">
    <citation type="journal article" date="1993" name="Mol. Microbiol.">
        <title>The Myf fibrillae of Yersinia enterocolitica.</title>
        <authorList>
            <person name="Iriarte M."/>
            <person name="Vanooteghem J.-C."/>
            <person name="Delor I."/>
            <person name="Diaz R."/>
            <person name="Knutton S."/>
            <person name="Cornelis G.R."/>
        </authorList>
    </citation>
    <scope>NUCLEOTIDE SEQUENCE [GENOMIC DNA]</scope>
    <source>
        <strain>W1024 / Serotype O:9</strain>
    </source>
</reference>
<accession>P33407</accession>
<feature type="signal peptide" evidence="1">
    <location>
        <begin position="1"/>
        <end position="34"/>
    </location>
</feature>
<feature type="chain" id="PRO_0000009283" description="Chaperone protein MyfB">
    <location>
        <begin position="35"/>
        <end position="267"/>
    </location>
</feature>
<feature type="disulfide bond" evidence="1">
    <location>
        <begin position="127"/>
        <end position="164"/>
    </location>
</feature>
<protein>
    <recommendedName>
        <fullName>Chaperone protein MyfB</fullName>
    </recommendedName>
</protein>
<comment type="function">
    <text>Required for the biogenesis of the MyfA fimbria.</text>
</comment>
<comment type="subcellular location">
    <subcellularLocation>
        <location>Periplasm</location>
    </subcellularLocation>
</comment>
<comment type="similarity">
    <text evidence="2">Belongs to the periplasmic pilus chaperone family.</text>
</comment>
<proteinExistence type="inferred from homology"/>
<dbReference type="EMBL" id="Z21953">
    <property type="protein sequence ID" value="CAA79952.1"/>
    <property type="molecule type" value="Genomic_DNA"/>
</dbReference>
<dbReference type="PIR" id="S39364">
    <property type="entry name" value="S39364"/>
</dbReference>
<dbReference type="SMR" id="P33407"/>
<dbReference type="GO" id="GO:0030288">
    <property type="term" value="C:outer membrane-bounded periplasmic space"/>
    <property type="evidence" value="ECO:0007669"/>
    <property type="project" value="InterPro"/>
</dbReference>
<dbReference type="GO" id="GO:0071555">
    <property type="term" value="P:cell wall organization"/>
    <property type="evidence" value="ECO:0007669"/>
    <property type="project" value="InterPro"/>
</dbReference>
<dbReference type="GO" id="GO:0061077">
    <property type="term" value="P:chaperone-mediated protein folding"/>
    <property type="evidence" value="ECO:0007669"/>
    <property type="project" value="InterPro"/>
</dbReference>
<dbReference type="Gene3D" id="2.60.40.10">
    <property type="entry name" value="Immunoglobulins"/>
    <property type="match status" value="2"/>
</dbReference>
<dbReference type="InterPro" id="IPR013783">
    <property type="entry name" value="Ig-like_fold"/>
</dbReference>
<dbReference type="InterPro" id="IPR008962">
    <property type="entry name" value="PapD-like_sf"/>
</dbReference>
<dbReference type="InterPro" id="IPR050643">
    <property type="entry name" value="Periplasmic_pilus_chap"/>
</dbReference>
<dbReference type="InterPro" id="IPR036316">
    <property type="entry name" value="Pili_assmbl_chap_C_dom_sf"/>
</dbReference>
<dbReference type="InterPro" id="IPR001829">
    <property type="entry name" value="Pili_assmbl_chaperone_bac"/>
</dbReference>
<dbReference type="InterPro" id="IPR016148">
    <property type="entry name" value="Pili_assmbl_chaperone_C"/>
</dbReference>
<dbReference type="InterPro" id="IPR018046">
    <property type="entry name" value="Pili_assmbl_chaperone_CS"/>
</dbReference>
<dbReference type="InterPro" id="IPR016147">
    <property type="entry name" value="Pili_assmbl_chaperone_N"/>
</dbReference>
<dbReference type="PANTHER" id="PTHR30251:SF9">
    <property type="entry name" value="CHAPERONE PROTEIN CAF1M"/>
    <property type="match status" value="1"/>
</dbReference>
<dbReference type="PANTHER" id="PTHR30251">
    <property type="entry name" value="PILUS ASSEMBLY CHAPERONE"/>
    <property type="match status" value="1"/>
</dbReference>
<dbReference type="Pfam" id="PF02753">
    <property type="entry name" value="PapD_C"/>
    <property type="match status" value="1"/>
</dbReference>
<dbReference type="Pfam" id="PF00345">
    <property type="entry name" value="PapD_N"/>
    <property type="match status" value="1"/>
</dbReference>
<dbReference type="PRINTS" id="PR00969">
    <property type="entry name" value="CHAPERONPILI"/>
</dbReference>
<dbReference type="SUPFAM" id="SSF49354">
    <property type="entry name" value="PapD-like"/>
    <property type="match status" value="1"/>
</dbReference>
<dbReference type="SUPFAM" id="SSF49584">
    <property type="entry name" value="Periplasmic chaperone C-domain"/>
    <property type="match status" value="1"/>
</dbReference>
<dbReference type="PROSITE" id="PS00635">
    <property type="entry name" value="PILI_CHAPERONE"/>
    <property type="match status" value="1"/>
</dbReference>
<evidence type="ECO:0000255" key="1"/>
<evidence type="ECO:0000305" key="2"/>
<keyword id="KW-0143">Chaperone</keyword>
<keyword id="KW-1015">Disulfide bond</keyword>
<keyword id="KW-1029">Fimbrium biogenesis</keyword>
<keyword id="KW-0393">Immunoglobulin domain</keyword>
<keyword id="KW-0574">Periplasm</keyword>
<keyword id="KW-0732">Signal</keyword>
<name>MYFB_YEREN</name>
<organism>
    <name type="scientific">Yersinia enterocolitica</name>
    <dbReference type="NCBI Taxonomy" id="630"/>
    <lineage>
        <taxon>Bacteria</taxon>
        <taxon>Pseudomonadati</taxon>
        <taxon>Pseudomonadota</taxon>
        <taxon>Gammaproteobacteria</taxon>
        <taxon>Enterobacterales</taxon>
        <taxon>Yersiniaceae</taxon>
        <taxon>Yersinia</taxon>
    </lineage>
</organism>
<gene>
    <name type="primary">myfB</name>
</gene>